<keyword id="KW-0687">Ribonucleoprotein</keyword>
<keyword id="KW-0689">Ribosomal protein</keyword>
<organism>
    <name type="scientific">Streptococcus pyogenes serotype M3 (strain ATCC BAA-595 / MGAS315)</name>
    <dbReference type="NCBI Taxonomy" id="198466"/>
    <lineage>
        <taxon>Bacteria</taxon>
        <taxon>Bacillati</taxon>
        <taxon>Bacillota</taxon>
        <taxon>Bacilli</taxon>
        <taxon>Lactobacillales</taxon>
        <taxon>Streptococcaceae</taxon>
        <taxon>Streptococcus</taxon>
    </lineage>
</organism>
<proteinExistence type="inferred from homology"/>
<reference key="1">
    <citation type="journal article" date="2002" name="Proc. Natl. Acad. Sci. U.S.A.">
        <title>Genome sequence of a serotype M3 strain of group A Streptococcus: phage-encoded toxins, the high-virulence phenotype, and clone emergence.</title>
        <authorList>
            <person name="Beres S.B."/>
            <person name="Sylva G.L."/>
            <person name="Barbian K.D."/>
            <person name="Lei B."/>
            <person name="Hoff J.S."/>
            <person name="Mammarella N.D."/>
            <person name="Liu M.-Y."/>
            <person name="Smoot J.C."/>
            <person name="Porcella S.F."/>
            <person name="Parkins L.D."/>
            <person name="Campbell D.S."/>
            <person name="Smith T.M."/>
            <person name="McCormick J.K."/>
            <person name="Leung D.Y.M."/>
            <person name="Schlievert P.M."/>
            <person name="Musser J.M."/>
        </authorList>
    </citation>
    <scope>NUCLEOTIDE SEQUENCE [LARGE SCALE GENOMIC DNA]</scope>
    <source>
        <strain>ATCC BAA-595 / MGAS315</strain>
    </source>
</reference>
<dbReference type="EMBL" id="AE014074">
    <property type="protein sequence ID" value="AAM78785.1"/>
    <property type="molecule type" value="Genomic_DNA"/>
</dbReference>
<dbReference type="RefSeq" id="WP_002885866.1">
    <property type="nucleotide sequence ID" value="NC_004070.1"/>
</dbReference>
<dbReference type="SMR" id="P0DE46"/>
<dbReference type="GeneID" id="93923177"/>
<dbReference type="KEGG" id="spg:SpyM3_0178"/>
<dbReference type="HOGENOM" id="CLU_129938_2_0_9"/>
<dbReference type="Proteomes" id="UP000000564">
    <property type="component" value="Chromosome"/>
</dbReference>
<dbReference type="GO" id="GO:1990904">
    <property type="term" value="C:ribonucleoprotein complex"/>
    <property type="evidence" value="ECO:0007669"/>
    <property type="project" value="UniProtKB-KW"/>
</dbReference>
<dbReference type="GO" id="GO:0005840">
    <property type="term" value="C:ribosome"/>
    <property type="evidence" value="ECO:0007669"/>
    <property type="project" value="UniProtKB-KW"/>
</dbReference>
<dbReference type="GO" id="GO:0003735">
    <property type="term" value="F:structural constituent of ribosome"/>
    <property type="evidence" value="ECO:0007669"/>
    <property type="project" value="InterPro"/>
</dbReference>
<dbReference type="GO" id="GO:0006412">
    <property type="term" value="P:translation"/>
    <property type="evidence" value="ECO:0007669"/>
    <property type="project" value="UniProtKB-UniRule"/>
</dbReference>
<dbReference type="FunFam" id="1.10.287.3980:FF:000001">
    <property type="entry name" value="Mitochondrial ribosomal protein L34"/>
    <property type="match status" value="1"/>
</dbReference>
<dbReference type="Gene3D" id="1.10.287.3980">
    <property type="match status" value="1"/>
</dbReference>
<dbReference type="HAMAP" id="MF_00391">
    <property type="entry name" value="Ribosomal_bL34"/>
    <property type="match status" value="1"/>
</dbReference>
<dbReference type="InterPro" id="IPR000271">
    <property type="entry name" value="Ribosomal_bL34"/>
</dbReference>
<dbReference type="InterPro" id="IPR020939">
    <property type="entry name" value="Ribosomal_bL34_CS"/>
</dbReference>
<dbReference type="NCBIfam" id="TIGR01030">
    <property type="entry name" value="rpmH_bact"/>
    <property type="match status" value="1"/>
</dbReference>
<dbReference type="PANTHER" id="PTHR14503:SF4">
    <property type="entry name" value="LARGE RIBOSOMAL SUBUNIT PROTEIN BL34M"/>
    <property type="match status" value="1"/>
</dbReference>
<dbReference type="PANTHER" id="PTHR14503">
    <property type="entry name" value="MITOCHONDRIAL RIBOSOMAL PROTEIN 34 FAMILY MEMBER"/>
    <property type="match status" value="1"/>
</dbReference>
<dbReference type="Pfam" id="PF00468">
    <property type="entry name" value="Ribosomal_L34"/>
    <property type="match status" value="1"/>
</dbReference>
<dbReference type="PROSITE" id="PS00784">
    <property type="entry name" value="RIBOSOMAL_L34"/>
    <property type="match status" value="1"/>
</dbReference>
<feature type="chain" id="PRO_0000187477" description="Large ribosomal subunit protein bL34">
    <location>
        <begin position="1"/>
        <end position="44"/>
    </location>
</feature>
<feature type="region of interest" description="Disordered" evidence="2">
    <location>
        <begin position="1"/>
        <end position="44"/>
    </location>
</feature>
<accession>P0DE46</accession>
<accession>P66259</accession>
<accession>Q9A1J1</accession>
<comment type="similarity">
    <text evidence="1">Belongs to the bacterial ribosomal protein bL34 family.</text>
</comment>
<name>RL34_STRP3</name>
<sequence length="44" mass="5361">MKRTYQPSKIRRQRKHGFRHRMSTKNGRRVLAARRRKGRKVLSA</sequence>
<evidence type="ECO:0000255" key="1">
    <source>
        <dbReference type="HAMAP-Rule" id="MF_00391"/>
    </source>
</evidence>
<evidence type="ECO:0000256" key="2">
    <source>
        <dbReference type="SAM" id="MobiDB-lite"/>
    </source>
</evidence>
<evidence type="ECO:0000305" key="3"/>
<gene>
    <name evidence="1" type="primary">rpmH</name>
    <name type="ordered locus">SpyM3_0178</name>
</gene>
<protein>
    <recommendedName>
        <fullName evidence="1">Large ribosomal subunit protein bL34</fullName>
    </recommendedName>
    <alternativeName>
        <fullName evidence="3">50S ribosomal protein L34</fullName>
    </alternativeName>
</protein>